<gene>
    <name evidence="1" type="primary">ndk</name>
    <name type="ordered locus">ABO_1864</name>
</gene>
<comment type="function">
    <text evidence="1">Major role in the synthesis of nucleoside triphosphates other than ATP. The ATP gamma phosphate is transferred to the NDP beta phosphate via a ping-pong mechanism, using a phosphorylated active-site intermediate.</text>
</comment>
<comment type="catalytic activity">
    <reaction evidence="1">
        <text>a 2'-deoxyribonucleoside 5'-diphosphate + ATP = a 2'-deoxyribonucleoside 5'-triphosphate + ADP</text>
        <dbReference type="Rhea" id="RHEA:44640"/>
        <dbReference type="ChEBI" id="CHEBI:30616"/>
        <dbReference type="ChEBI" id="CHEBI:61560"/>
        <dbReference type="ChEBI" id="CHEBI:73316"/>
        <dbReference type="ChEBI" id="CHEBI:456216"/>
        <dbReference type="EC" id="2.7.4.6"/>
    </reaction>
</comment>
<comment type="catalytic activity">
    <reaction evidence="1">
        <text>a ribonucleoside 5'-diphosphate + ATP = a ribonucleoside 5'-triphosphate + ADP</text>
        <dbReference type="Rhea" id="RHEA:18113"/>
        <dbReference type="ChEBI" id="CHEBI:30616"/>
        <dbReference type="ChEBI" id="CHEBI:57930"/>
        <dbReference type="ChEBI" id="CHEBI:61557"/>
        <dbReference type="ChEBI" id="CHEBI:456216"/>
        <dbReference type="EC" id="2.7.4.6"/>
    </reaction>
</comment>
<comment type="cofactor">
    <cofactor evidence="1">
        <name>Mg(2+)</name>
        <dbReference type="ChEBI" id="CHEBI:18420"/>
    </cofactor>
</comment>
<comment type="subunit">
    <text evidence="1">Homotetramer.</text>
</comment>
<comment type="subcellular location">
    <subcellularLocation>
        <location evidence="1">Cytoplasm</location>
    </subcellularLocation>
</comment>
<comment type="similarity">
    <text evidence="1">Belongs to the NDK family.</text>
</comment>
<proteinExistence type="inferred from homology"/>
<dbReference type="EC" id="2.7.4.6" evidence="1"/>
<dbReference type="EMBL" id="AM286690">
    <property type="protein sequence ID" value="CAL17312.1"/>
    <property type="molecule type" value="Genomic_DNA"/>
</dbReference>
<dbReference type="RefSeq" id="WP_011589143.1">
    <property type="nucleotide sequence ID" value="NC_008260.1"/>
</dbReference>
<dbReference type="SMR" id="Q0VND6"/>
<dbReference type="STRING" id="393595.ABO_1864"/>
<dbReference type="KEGG" id="abo:ABO_1864"/>
<dbReference type="eggNOG" id="COG0105">
    <property type="taxonomic scope" value="Bacteria"/>
</dbReference>
<dbReference type="HOGENOM" id="CLU_060216_8_1_6"/>
<dbReference type="OrthoDB" id="9801161at2"/>
<dbReference type="Proteomes" id="UP000008871">
    <property type="component" value="Chromosome"/>
</dbReference>
<dbReference type="GO" id="GO:0005737">
    <property type="term" value="C:cytoplasm"/>
    <property type="evidence" value="ECO:0007669"/>
    <property type="project" value="UniProtKB-SubCell"/>
</dbReference>
<dbReference type="GO" id="GO:0005524">
    <property type="term" value="F:ATP binding"/>
    <property type="evidence" value="ECO:0007669"/>
    <property type="project" value="UniProtKB-UniRule"/>
</dbReference>
<dbReference type="GO" id="GO:0046872">
    <property type="term" value="F:metal ion binding"/>
    <property type="evidence" value="ECO:0007669"/>
    <property type="project" value="UniProtKB-KW"/>
</dbReference>
<dbReference type="GO" id="GO:0004550">
    <property type="term" value="F:nucleoside diphosphate kinase activity"/>
    <property type="evidence" value="ECO:0007669"/>
    <property type="project" value="UniProtKB-UniRule"/>
</dbReference>
<dbReference type="GO" id="GO:0006241">
    <property type="term" value="P:CTP biosynthetic process"/>
    <property type="evidence" value="ECO:0007669"/>
    <property type="project" value="UniProtKB-UniRule"/>
</dbReference>
<dbReference type="GO" id="GO:0006183">
    <property type="term" value="P:GTP biosynthetic process"/>
    <property type="evidence" value="ECO:0007669"/>
    <property type="project" value="UniProtKB-UniRule"/>
</dbReference>
<dbReference type="GO" id="GO:0006228">
    <property type="term" value="P:UTP biosynthetic process"/>
    <property type="evidence" value="ECO:0007669"/>
    <property type="project" value="UniProtKB-UniRule"/>
</dbReference>
<dbReference type="CDD" id="cd04413">
    <property type="entry name" value="NDPk_I"/>
    <property type="match status" value="1"/>
</dbReference>
<dbReference type="FunFam" id="3.30.70.141:FF:000001">
    <property type="entry name" value="Nucleoside diphosphate kinase"/>
    <property type="match status" value="1"/>
</dbReference>
<dbReference type="Gene3D" id="3.30.70.141">
    <property type="entry name" value="Nucleoside diphosphate kinase-like domain"/>
    <property type="match status" value="1"/>
</dbReference>
<dbReference type="HAMAP" id="MF_00451">
    <property type="entry name" value="NDP_kinase"/>
    <property type="match status" value="1"/>
</dbReference>
<dbReference type="InterPro" id="IPR034907">
    <property type="entry name" value="NDK-like_dom"/>
</dbReference>
<dbReference type="InterPro" id="IPR036850">
    <property type="entry name" value="NDK-like_dom_sf"/>
</dbReference>
<dbReference type="InterPro" id="IPR001564">
    <property type="entry name" value="Nucleoside_diP_kinase"/>
</dbReference>
<dbReference type="NCBIfam" id="NF001908">
    <property type="entry name" value="PRK00668.1"/>
    <property type="match status" value="1"/>
</dbReference>
<dbReference type="PANTHER" id="PTHR46161">
    <property type="entry name" value="NUCLEOSIDE DIPHOSPHATE KINASE"/>
    <property type="match status" value="1"/>
</dbReference>
<dbReference type="PANTHER" id="PTHR46161:SF3">
    <property type="entry name" value="NUCLEOSIDE DIPHOSPHATE KINASE DDB_G0292928-RELATED"/>
    <property type="match status" value="1"/>
</dbReference>
<dbReference type="Pfam" id="PF00334">
    <property type="entry name" value="NDK"/>
    <property type="match status" value="1"/>
</dbReference>
<dbReference type="PRINTS" id="PR01243">
    <property type="entry name" value="NUCDPKINASE"/>
</dbReference>
<dbReference type="SMART" id="SM00562">
    <property type="entry name" value="NDK"/>
    <property type="match status" value="1"/>
</dbReference>
<dbReference type="SUPFAM" id="SSF54919">
    <property type="entry name" value="Nucleoside diphosphate kinase, NDK"/>
    <property type="match status" value="1"/>
</dbReference>
<dbReference type="PROSITE" id="PS51374">
    <property type="entry name" value="NDPK_LIKE"/>
    <property type="match status" value="1"/>
</dbReference>
<evidence type="ECO:0000255" key="1">
    <source>
        <dbReference type="HAMAP-Rule" id="MF_00451"/>
    </source>
</evidence>
<keyword id="KW-0067">ATP-binding</keyword>
<keyword id="KW-0963">Cytoplasm</keyword>
<keyword id="KW-0418">Kinase</keyword>
<keyword id="KW-0460">Magnesium</keyword>
<keyword id="KW-0479">Metal-binding</keyword>
<keyword id="KW-0546">Nucleotide metabolism</keyword>
<keyword id="KW-0547">Nucleotide-binding</keyword>
<keyword id="KW-0597">Phosphoprotein</keyword>
<keyword id="KW-1185">Reference proteome</keyword>
<keyword id="KW-0808">Transferase</keyword>
<feature type="chain" id="PRO_0000267767" description="Nucleoside diphosphate kinase">
    <location>
        <begin position="1"/>
        <end position="143"/>
    </location>
</feature>
<feature type="active site" description="Pros-phosphohistidine intermediate" evidence="1">
    <location>
        <position position="117"/>
    </location>
</feature>
<feature type="binding site" evidence="1">
    <location>
        <position position="11"/>
    </location>
    <ligand>
        <name>ATP</name>
        <dbReference type="ChEBI" id="CHEBI:30616"/>
    </ligand>
</feature>
<feature type="binding site" evidence="1">
    <location>
        <position position="59"/>
    </location>
    <ligand>
        <name>ATP</name>
        <dbReference type="ChEBI" id="CHEBI:30616"/>
    </ligand>
</feature>
<feature type="binding site" evidence="1">
    <location>
        <position position="87"/>
    </location>
    <ligand>
        <name>ATP</name>
        <dbReference type="ChEBI" id="CHEBI:30616"/>
    </ligand>
</feature>
<feature type="binding site" evidence="1">
    <location>
        <position position="93"/>
    </location>
    <ligand>
        <name>ATP</name>
        <dbReference type="ChEBI" id="CHEBI:30616"/>
    </ligand>
</feature>
<feature type="binding site" evidence="1">
    <location>
        <position position="104"/>
    </location>
    <ligand>
        <name>ATP</name>
        <dbReference type="ChEBI" id="CHEBI:30616"/>
    </ligand>
</feature>
<feature type="binding site" evidence="1">
    <location>
        <position position="114"/>
    </location>
    <ligand>
        <name>ATP</name>
        <dbReference type="ChEBI" id="CHEBI:30616"/>
    </ligand>
</feature>
<reference key="1">
    <citation type="journal article" date="2006" name="Nat. Biotechnol.">
        <title>Genome sequence of the ubiquitous hydrocarbon-degrading marine bacterium Alcanivorax borkumensis.</title>
        <authorList>
            <person name="Schneiker S."/>
            <person name="Martins dos Santos V.A.P."/>
            <person name="Bartels D."/>
            <person name="Bekel T."/>
            <person name="Brecht M."/>
            <person name="Buhrmester J."/>
            <person name="Chernikova T.N."/>
            <person name="Denaro R."/>
            <person name="Ferrer M."/>
            <person name="Gertler C."/>
            <person name="Goesmann A."/>
            <person name="Golyshina O.V."/>
            <person name="Kaminski F."/>
            <person name="Khachane A.N."/>
            <person name="Lang S."/>
            <person name="Linke B."/>
            <person name="McHardy A.C."/>
            <person name="Meyer F."/>
            <person name="Nechitaylo T."/>
            <person name="Puehler A."/>
            <person name="Regenhardt D."/>
            <person name="Rupp O."/>
            <person name="Sabirova J.S."/>
            <person name="Selbitschka W."/>
            <person name="Yakimov M.M."/>
            <person name="Timmis K.N."/>
            <person name="Vorhoelter F.-J."/>
            <person name="Weidner S."/>
            <person name="Kaiser O."/>
            <person name="Golyshin P.N."/>
        </authorList>
    </citation>
    <scope>NUCLEOTIDE SEQUENCE [LARGE SCALE GENOMIC DNA]</scope>
    <source>
        <strain>ATCC 700651 / DSM 11573 / NCIMB 13689 / SK2</strain>
    </source>
</reference>
<protein>
    <recommendedName>
        <fullName evidence="1">Nucleoside diphosphate kinase</fullName>
        <shortName evidence="1">NDK</shortName>
        <shortName evidence="1">NDP kinase</shortName>
        <ecNumber evidence="1">2.7.4.6</ecNumber>
    </recommendedName>
    <alternativeName>
        <fullName evidence="1">Nucleoside-2-P kinase</fullName>
    </alternativeName>
</protein>
<organism>
    <name type="scientific">Alcanivorax borkumensis (strain ATCC 700651 / DSM 11573 / NCIMB 13689 / SK2)</name>
    <dbReference type="NCBI Taxonomy" id="393595"/>
    <lineage>
        <taxon>Bacteria</taxon>
        <taxon>Pseudomonadati</taxon>
        <taxon>Pseudomonadota</taxon>
        <taxon>Gammaproteobacteria</taxon>
        <taxon>Oceanospirillales</taxon>
        <taxon>Alcanivoracaceae</taxon>
        <taxon>Alcanivorax</taxon>
    </lineage>
</organism>
<sequence length="143" mass="15409">MAVERTLSIIKPDAVAKNVIGEIVTRFEKAGLSVVAMKMVHLSDEKAGGFYAEHKERPFFKDLVGFMTSGPVVVQVLEGEDAVAKNRDLMGATNPKEAEAGTIRADFAETIDANAVHGSDSTESAAREVAYFFSDEEVCPRAS</sequence>
<name>NDK_ALCBS</name>
<accession>Q0VND6</accession>